<name>Y8800_DICDI</name>
<reference key="1">
    <citation type="journal article" date="2005" name="Nature">
        <title>The genome of the social amoeba Dictyostelium discoideum.</title>
        <authorList>
            <person name="Eichinger L."/>
            <person name="Pachebat J.A."/>
            <person name="Gloeckner G."/>
            <person name="Rajandream M.A."/>
            <person name="Sucgang R."/>
            <person name="Berriman M."/>
            <person name="Song J."/>
            <person name="Olsen R."/>
            <person name="Szafranski K."/>
            <person name="Xu Q."/>
            <person name="Tunggal B."/>
            <person name="Kummerfeld S."/>
            <person name="Madera M."/>
            <person name="Konfortov B.A."/>
            <person name="Rivero F."/>
            <person name="Bankier A.T."/>
            <person name="Lehmann R."/>
            <person name="Hamlin N."/>
            <person name="Davies R."/>
            <person name="Gaudet P."/>
            <person name="Fey P."/>
            <person name="Pilcher K."/>
            <person name="Chen G."/>
            <person name="Saunders D."/>
            <person name="Sodergren E.J."/>
            <person name="Davis P."/>
            <person name="Kerhornou A."/>
            <person name="Nie X."/>
            <person name="Hall N."/>
            <person name="Anjard C."/>
            <person name="Hemphill L."/>
            <person name="Bason N."/>
            <person name="Farbrother P."/>
            <person name="Desany B."/>
            <person name="Just E."/>
            <person name="Morio T."/>
            <person name="Rost R."/>
            <person name="Churcher C.M."/>
            <person name="Cooper J."/>
            <person name="Haydock S."/>
            <person name="van Driessche N."/>
            <person name="Cronin A."/>
            <person name="Goodhead I."/>
            <person name="Muzny D.M."/>
            <person name="Mourier T."/>
            <person name="Pain A."/>
            <person name="Lu M."/>
            <person name="Harper D."/>
            <person name="Lindsay R."/>
            <person name="Hauser H."/>
            <person name="James K.D."/>
            <person name="Quiles M."/>
            <person name="Madan Babu M."/>
            <person name="Saito T."/>
            <person name="Buchrieser C."/>
            <person name="Wardroper A."/>
            <person name="Felder M."/>
            <person name="Thangavelu M."/>
            <person name="Johnson D."/>
            <person name="Knights A."/>
            <person name="Loulseged H."/>
            <person name="Mungall K.L."/>
            <person name="Oliver K."/>
            <person name="Price C."/>
            <person name="Quail M.A."/>
            <person name="Urushihara H."/>
            <person name="Hernandez J."/>
            <person name="Rabbinowitsch E."/>
            <person name="Steffen D."/>
            <person name="Sanders M."/>
            <person name="Ma J."/>
            <person name="Kohara Y."/>
            <person name="Sharp S."/>
            <person name="Simmonds M.N."/>
            <person name="Spiegler S."/>
            <person name="Tivey A."/>
            <person name="Sugano S."/>
            <person name="White B."/>
            <person name="Walker D."/>
            <person name="Woodward J.R."/>
            <person name="Winckler T."/>
            <person name="Tanaka Y."/>
            <person name="Shaulsky G."/>
            <person name="Schleicher M."/>
            <person name="Weinstock G.M."/>
            <person name="Rosenthal A."/>
            <person name="Cox E.C."/>
            <person name="Chisholm R.L."/>
            <person name="Gibbs R.A."/>
            <person name="Loomis W.F."/>
            <person name="Platzer M."/>
            <person name="Kay R.R."/>
            <person name="Williams J.G."/>
            <person name="Dear P.H."/>
            <person name="Noegel A.A."/>
            <person name="Barrell B.G."/>
            <person name="Kuspa A."/>
        </authorList>
    </citation>
    <scope>NUCLEOTIDE SEQUENCE [LARGE SCALE GENOMIC DNA]</scope>
    <source>
        <strain>AX4</strain>
    </source>
</reference>
<accession>Q54M23</accession>
<feature type="chain" id="PRO_0000348525" description="Putative uncharacterized protein DDB_G0286333">
    <location>
        <begin position="1"/>
        <end position="621"/>
    </location>
</feature>
<feature type="region of interest" description="Disordered" evidence="1">
    <location>
        <begin position="1"/>
        <end position="29"/>
    </location>
</feature>
<feature type="region of interest" description="Disordered" evidence="1">
    <location>
        <begin position="63"/>
        <end position="100"/>
    </location>
</feature>
<feature type="region of interest" description="Disordered" evidence="1">
    <location>
        <begin position="135"/>
        <end position="194"/>
    </location>
</feature>
<feature type="region of interest" description="Disordered" evidence="1">
    <location>
        <begin position="307"/>
        <end position="374"/>
    </location>
</feature>
<feature type="region of interest" description="Disordered" evidence="1">
    <location>
        <begin position="430"/>
        <end position="471"/>
    </location>
</feature>
<feature type="region of interest" description="Disordered" evidence="1">
    <location>
        <begin position="492"/>
        <end position="539"/>
    </location>
</feature>
<feature type="region of interest" description="Disordered" evidence="1">
    <location>
        <begin position="594"/>
        <end position="614"/>
    </location>
</feature>
<feature type="compositionally biased region" description="Low complexity" evidence="1">
    <location>
        <begin position="1"/>
        <end position="10"/>
    </location>
</feature>
<feature type="compositionally biased region" description="Low complexity" evidence="1">
    <location>
        <begin position="63"/>
        <end position="79"/>
    </location>
</feature>
<feature type="compositionally biased region" description="Low complexity" evidence="1">
    <location>
        <begin position="137"/>
        <end position="182"/>
    </location>
</feature>
<feature type="compositionally biased region" description="Low complexity" evidence="1">
    <location>
        <begin position="309"/>
        <end position="347"/>
    </location>
</feature>
<feature type="compositionally biased region" description="Polar residues" evidence="1">
    <location>
        <begin position="348"/>
        <end position="357"/>
    </location>
</feature>
<feature type="compositionally biased region" description="Low complexity" evidence="1">
    <location>
        <begin position="431"/>
        <end position="459"/>
    </location>
</feature>
<feature type="compositionally biased region" description="Low complexity" evidence="1">
    <location>
        <begin position="496"/>
        <end position="539"/>
    </location>
</feature>
<feature type="compositionally biased region" description="Low complexity" evidence="1">
    <location>
        <begin position="597"/>
        <end position="613"/>
    </location>
</feature>
<organism>
    <name type="scientific">Dictyostelium discoideum</name>
    <name type="common">Social amoeba</name>
    <dbReference type="NCBI Taxonomy" id="44689"/>
    <lineage>
        <taxon>Eukaryota</taxon>
        <taxon>Amoebozoa</taxon>
        <taxon>Evosea</taxon>
        <taxon>Eumycetozoa</taxon>
        <taxon>Dictyostelia</taxon>
        <taxon>Dictyosteliales</taxon>
        <taxon>Dictyosteliaceae</taxon>
        <taxon>Dictyostelium</taxon>
    </lineage>
</organism>
<keyword id="KW-1185">Reference proteome</keyword>
<sequence length="621" mass="70782">MIEDNINNNENENEDKNGNGNENENDKNNKNNKFEALLMQSPISQSTPFIFPSPKINSNILTTEPLTTQLSSSPTTTPSLKKRKPKTVRNPFIGPSSNKTKSNFPEFPSWTFEKNNNDFCQGGLSIKNKHLFTFDDNNNNNNNNNNNNNNNNNNNNNNNNNLNINFNNRSIYNNYKNNNNFNQSDDEDCEKDNDRFLNSENFDEEEDEEDEDDCTNKNFEWSIDMLATIMPVNITLDNQQNNLNSTNNSDNGYESSTELFEFKKWKIEDEKKSNDYFSRPTIYPHVKINNQNNQNNQNNSFLFKSSKTNQSIQQLQQQQQQQQQQQQQQNNNDNNNNNNNNNNNNNNSTLTSSNSLSGIKRKSSGSNYNSEDDTYSIEKDQTGVSAFVDDILIGDINLSSISSIGGGNSGIVFGRPTIFNTPTHFNTYIYNNNNNNNNNNNNNNNNNNNNNNNNNNNNNSGSNSKPIIAKRFPNRPQFPECLEESFSINLNKQSQNNNNNNNNNNNNNNNNNNNNNNNNNNNNNNNNNNNNNNNNIKIINNNNNDSDIFLTPMTPVKITSVTKSTRKSKYNFHVTDPLILPDISPIKIKHPITPTQINSNSSNNIVSPSSSPSKKFEYCKF</sequence>
<dbReference type="EMBL" id="AAFI02000085">
    <property type="protein sequence ID" value="EAL64342.1"/>
    <property type="molecule type" value="Genomic_DNA"/>
</dbReference>
<dbReference type="RefSeq" id="XP_637808.1">
    <property type="nucleotide sequence ID" value="XM_632716.1"/>
</dbReference>
<dbReference type="FunCoup" id="Q54M23">
    <property type="interactions" value="877"/>
</dbReference>
<dbReference type="STRING" id="44689.Q54M23"/>
<dbReference type="PaxDb" id="44689-DDB0218800"/>
<dbReference type="EnsemblProtists" id="EAL64342">
    <property type="protein sequence ID" value="EAL64342"/>
    <property type="gene ID" value="DDB_G0286333"/>
</dbReference>
<dbReference type="GeneID" id="8625522"/>
<dbReference type="KEGG" id="ddi:DDB_G0286333"/>
<dbReference type="dictyBase" id="DDB_G0286333"/>
<dbReference type="VEuPathDB" id="AmoebaDB:DDB_G0286333"/>
<dbReference type="eggNOG" id="ENOG502SXE5">
    <property type="taxonomic scope" value="Eukaryota"/>
</dbReference>
<dbReference type="HOGENOM" id="CLU_440351_0_0_1"/>
<dbReference type="InParanoid" id="Q54M23"/>
<dbReference type="OMA" id="FEWSIDM"/>
<dbReference type="PRO" id="PR:Q54M23"/>
<dbReference type="Proteomes" id="UP000002195">
    <property type="component" value="Chromosome 4"/>
</dbReference>
<gene>
    <name type="ORF">DDB_G0286333</name>
</gene>
<protein>
    <recommendedName>
        <fullName>Putative uncharacterized protein DDB_G0286333</fullName>
    </recommendedName>
</protein>
<evidence type="ECO:0000256" key="1">
    <source>
        <dbReference type="SAM" id="MobiDB-lite"/>
    </source>
</evidence>
<proteinExistence type="predicted"/>